<dbReference type="EMBL" id="AY580321">
    <property type="protein sequence ID" value="AAS93424.1"/>
    <property type="molecule type" value="mRNA"/>
</dbReference>
<dbReference type="EMBL" id="DQ359141">
    <property type="protein sequence ID" value="ABD48792.1"/>
    <property type="molecule type" value="mRNA"/>
</dbReference>
<dbReference type="EMBL" id="DQ309776">
    <property type="protein sequence ID" value="ABC39769.1"/>
    <property type="molecule type" value="Genomic_DNA"/>
</dbReference>
<dbReference type="ConoServer" id="119">
    <property type="toxin name" value="Lp1.1 precursor"/>
</dbReference>
<dbReference type="ConoServer" id="543">
    <property type="toxin name" value="Lp1.1 precursor"/>
</dbReference>
<dbReference type="GO" id="GO:0005576">
    <property type="term" value="C:extracellular region"/>
    <property type="evidence" value="ECO:0007669"/>
    <property type="project" value="UniProtKB-SubCell"/>
</dbReference>
<dbReference type="GO" id="GO:0035792">
    <property type="term" value="C:host cell postsynaptic membrane"/>
    <property type="evidence" value="ECO:0007669"/>
    <property type="project" value="UniProtKB-KW"/>
</dbReference>
<dbReference type="GO" id="GO:0030550">
    <property type="term" value="F:acetylcholine receptor inhibitor activity"/>
    <property type="evidence" value="ECO:0007669"/>
    <property type="project" value="UniProtKB-KW"/>
</dbReference>
<dbReference type="GO" id="GO:0099106">
    <property type="term" value="F:ion channel regulator activity"/>
    <property type="evidence" value="ECO:0007669"/>
    <property type="project" value="UniProtKB-KW"/>
</dbReference>
<dbReference type="GO" id="GO:0090729">
    <property type="term" value="F:toxin activity"/>
    <property type="evidence" value="ECO:0007669"/>
    <property type="project" value="UniProtKB-KW"/>
</dbReference>
<dbReference type="InterPro" id="IPR009958">
    <property type="entry name" value="Conotoxin_a-typ"/>
</dbReference>
<dbReference type="Pfam" id="PF07365">
    <property type="entry name" value="Toxin_8"/>
    <property type="match status" value="1"/>
</dbReference>
<sequence length="68" mass="7155">MGMRMMFIMFMLVVLATTVVTFTSDRALDAMNAAASNKASRLIALAVRGCCARAACAGIHQELCGGGR</sequence>
<evidence type="ECO:0000250" key="1">
    <source>
        <dbReference type="UniProtKB" id="P85886"/>
    </source>
</evidence>
<evidence type="ECO:0000250" key="2">
    <source>
        <dbReference type="UniProtKB" id="Q2I2R8"/>
    </source>
</evidence>
<evidence type="ECO:0000255" key="3"/>
<evidence type="ECO:0000269" key="4">
    <source>
    </source>
</evidence>
<evidence type="ECO:0000303" key="5">
    <source>
    </source>
</evidence>
<evidence type="ECO:0000305" key="6"/>
<evidence type="ECO:0000305" key="7">
    <source>
    </source>
</evidence>
<evidence type="ECO:0000305" key="8">
    <source>
    </source>
</evidence>
<feature type="signal peptide" evidence="3">
    <location>
        <begin position="1"/>
        <end position="21"/>
    </location>
</feature>
<feature type="propeptide" id="PRO_0000370647" evidence="7">
    <location>
        <begin position="22"/>
        <end position="48"/>
    </location>
</feature>
<feature type="peptide" id="PRO_0000370648" description="Alpha-conotoxin Lp1.1" evidence="7">
    <location>
        <begin position="49"/>
        <end position="65"/>
    </location>
</feature>
<feature type="propeptide" id="PRO_0000370649" evidence="7">
    <location>
        <begin position="66"/>
        <end position="68"/>
    </location>
</feature>
<feature type="region of interest" description="Lacks the Ser-Xaa-Pro motif that is crucial for potent interaction with nAChR" evidence="2">
    <location>
        <begin position="52"/>
        <end position="54"/>
    </location>
</feature>
<feature type="modified residue" description="Glycine amide" evidence="1 7">
    <location>
        <position position="65"/>
    </location>
</feature>
<feature type="disulfide bond" evidence="8">
    <location>
        <begin position="50"/>
        <end position="56"/>
    </location>
</feature>
<feature type="disulfide bond" evidence="8">
    <location>
        <begin position="51"/>
        <end position="64"/>
    </location>
</feature>
<feature type="sequence conflict" description="In Ref. 1; ABC39769." evidence="6" ref="1">
    <original>V</original>
    <variation>D</variation>
    <location>
        <position position="20"/>
    </location>
</feature>
<feature type="sequence conflict" description="In Ref. 1; ABC39769." evidence="6" ref="1">
    <original>R</original>
    <variation>H</variation>
    <location>
        <position position="26"/>
    </location>
</feature>
<feature type="sequence conflict" description="In Ref. 1; ABC39769." evidence="6" ref="1">
    <original>G</original>
    <variation>R</variation>
    <location>
        <position position="67"/>
    </location>
</feature>
<protein>
    <recommendedName>
        <fullName evidence="5">Alpha-conotoxin Lp1.1</fullName>
    </recommendedName>
</protein>
<name>CA11_CONLE</name>
<reference key="1">
    <citation type="journal article" date="2007" name="Toxicon">
        <title>From the identification of gene organization of alpha conotoxins to the cloning of novel toxins.</title>
        <authorList>
            <person name="Yuan D.-D."/>
            <person name="Han Y.-H."/>
            <person name="Wang C.-G."/>
            <person name="Chi C.-W."/>
        </authorList>
    </citation>
    <scope>NUCLEOTIDE SEQUENCE [GENOMIC DNA / MRNA]</scope>
    <scope>AMIDATION AT GLY-65</scope>
</reference>
<reference key="2">
    <citation type="journal article" date="2008" name="Peptides">
        <title>Alpha4/7-conotoxin Lp1.1 is a novel antagonist of neuronal nicotinic acetylcholine receptors.</title>
        <authorList>
            <person name="Peng C."/>
            <person name="Han Y.-H."/>
            <person name="Sanders T."/>
            <person name="Chew G."/>
            <person name="Liu J."/>
            <person name="Hawrot E."/>
            <person name="Chi C.-W."/>
            <person name="Wang C.-G."/>
        </authorList>
    </citation>
    <scope>SYNTHESIS OF 49-64</scope>
    <scope>FUNCTION</scope>
    <scope>BIOASSAY</scope>
</reference>
<organism>
    <name type="scientific">Conus leopardus</name>
    <name type="common">Leopard cone</name>
    <dbReference type="NCBI Taxonomy" id="101306"/>
    <lineage>
        <taxon>Eukaryota</taxon>
        <taxon>Metazoa</taxon>
        <taxon>Spiralia</taxon>
        <taxon>Lophotrochozoa</taxon>
        <taxon>Mollusca</taxon>
        <taxon>Gastropoda</taxon>
        <taxon>Caenogastropoda</taxon>
        <taxon>Neogastropoda</taxon>
        <taxon>Conoidea</taxon>
        <taxon>Conidae</taxon>
        <taxon>Conus</taxon>
        <taxon>Lithoconus</taxon>
    </lineage>
</organism>
<comment type="function">
    <text evidence="2 4">Alpha-conotoxins act on postsynaptic membranes, they bind to the nicotinic acetylcholine receptors (nAChR) and thus inhibit them. Synthetic peptide inhibits alpha-6/alpha-3/beta-2 and alpha-3/beta-2 nicotinic acetylcholine receptors and causes uncoordinated movement when intramuscularly injected into goldfish (PubMed:18588930). Has a distinct nAChR binding mode from other alpha-conotoxins, due to a different three residue motif (Ala-Xaa-Ala instead of the conserved Ser-Xaa-Pro motif) (By similarity).</text>
</comment>
<comment type="subcellular location">
    <subcellularLocation>
        <location evidence="7">Secreted</location>
    </subcellularLocation>
</comment>
<comment type="tissue specificity">
    <text evidence="7">Expressed by the venom duct.</text>
</comment>
<comment type="domain">
    <text evidence="6">The cysteine framework is I (CC-C-C). Alpha4/7 pattern.</text>
</comment>
<comment type="similarity">
    <text evidence="6">Belongs to the conotoxin A superfamily.</text>
</comment>
<keyword id="KW-0008">Acetylcholine receptor inhibiting toxin</keyword>
<keyword id="KW-0027">Amidation</keyword>
<keyword id="KW-1015">Disulfide bond</keyword>
<keyword id="KW-0872">Ion channel impairing toxin</keyword>
<keyword id="KW-0528">Neurotoxin</keyword>
<keyword id="KW-0629">Postsynaptic neurotoxin</keyword>
<keyword id="KW-0964">Secreted</keyword>
<keyword id="KW-0732">Signal</keyword>
<keyword id="KW-0800">Toxin</keyword>
<accession>Q6PTD5</accession>
<accession>A0SE61</accession>
<proteinExistence type="evidence at protein level"/>